<organism>
    <name type="scientific">Mus musculus</name>
    <name type="common">Mouse</name>
    <dbReference type="NCBI Taxonomy" id="10090"/>
    <lineage>
        <taxon>Eukaryota</taxon>
        <taxon>Metazoa</taxon>
        <taxon>Chordata</taxon>
        <taxon>Craniata</taxon>
        <taxon>Vertebrata</taxon>
        <taxon>Euteleostomi</taxon>
        <taxon>Mammalia</taxon>
        <taxon>Eutheria</taxon>
        <taxon>Euarchontoglires</taxon>
        <taxon>Glires</taxon>
        <taxon>Rodentia</taxon>
        <taxon>Myomorpha</taxon>
        <taxon>Muroidea</taxon>
        <taxon>Muridae</taxon>
        <taxon>Murinae</taxon>
        <taxon>Mus</taxon>
        <taxon>Mus</taxon>
    </lineage>
</organism>
<proteinExistence type="evidence at protein level"/>
<dbReference type="EMBL" id="U76112">
    <property type="protein sequence ID" value="AAC53095.1"/>
    <property type="molecule type" value="mRNA"/>
</dbReference>
<dbReference type="EMBL" id="U63323">
    <property type="protein sequence ID" value="AAC53030.1"/>
    <property type="molecule type" value="mRNA"/>
</dbReference>
<dbReference type="EMBL" id="AK144309">
    <property type="protein sequence ID" value="BAE25826.1"/>
    <property type="status" value="ALT_INIT"/>
    <property type="molecule type" value="mRNA"/>
</dbReference>
<dbReference type="EMBL" id="BC040391">
    <property type="protein sequence ID" value="AAH40391.2"/>
    <property type="molecule type" value="mRNA"/>
</dbReference>
<dbReference type="EMBL" id="BC043034">
    <property type="protein sequence ID" value="AAH43034.2"/>
    <property type="molecule type" value="mRNA"/>
</dbReference>
<dbReference type="EMBL" id="BC056387">
    <property type="protein sequence ID" value="AAH56387.1"/>
    <property type="molecule type" value="mRNA"/>
</dbReference>
<dbReference type="EMBL" id="BC057673">
    <property type="protein sequence ID" value="AAH57673.2"/>
    <property type="molecule type" value="mRNA"/>
</dbReference>
<dbReference type="EMBL" id="BC064810">
    <property type="protein sequence ID" value="AAH64810.2"/>
    <property type="molecule type" value="mRNA"/>
</dbReference>
<dbReference type="EMBL" id="BC092521">
    <property type="protein sequence ID" value="AAH92521.1"/>
    <property type="molecule type" value="mRNA"/>
</dbReference>
<dbReference type="CCDS" id="CCDS40087.1">
    <molecule id="Q62448-2"/>
</dbReference>
<dbReference type="CCDS" id="CCDS40088.1">
    <molecule id="Q62448-1"/>
</dbReference>
<dbReference type="RefSeq" id="NP_001035221.1">
    <property type="nucleotide sequence ID" value="NM_001040131.2"/>
</dbReference>
<dbReference type="RefSeq" id="NP_038535.2">
    <property type="nucleotide sequence ID" value="NM_013507.3"/>
</dbReference>
<dbReference type="SMR" id="Q62448"/>
<dbReference type="BioGRID" id="199423">
    <property type="interactions" value="16"/>
</dbReference>
<dbReference type="FunCoup" id="Q62448">
    <property type="interactions" value="3394"/>
</dbReference>
<dbReference type="IntAct" id="Q62448">
    <property type="interactions" value="3"/>
</dbReference>
<dbReference type="MINT" id="Q62448"/>
<dbReference type="STRING" id="10090.ENSMUSP00000124551"/>
<dbReference type="BindingDB" id="Q62448"/>
<dbReference type="ChEMBL" id="CHEMBL5169160"/>
<dbReference type="GlyGen" id="Q62448">
    <property type="glycosylation" value="4 sites, 2 N-linked glycans (2 sites), 1 O-linked glycan (2 sites)"/>
</dbReference>
<dbReference type="iPTMnet" id="Q62448"/>
<dbReference type="MetOSite" id="Q62448"/>
<dbReference type="PhosphoSitePlus" id="Q62448"/>
<dbReference type="SwissPalm" id="Q62448"/>
<dbReference type="jPOST" id="Q62448"/>
<dbReference type="PaxDb" id="10090-ENSMUSP00000124551"/>
<dbReference type="PeptideAtlas" id="Q62448"/>
<dbReference type="ProteomicsDB" id="266947">
    <molecule id="Q62448-1"/>
</dbReference>
<dbReference type="ProteomicsDB" id="266948">
    <molecule id="Q62448-2"/>
</dbReference>
<dbReference type="Pumba" id="Q62448"/>
<dbReference type="DNASU" id="13690"/>
<dbReference type="GeneID" id="13690"/>
<dbReference type="KEGG" id="mmu:13690"/>
<dbReference type="AGR" id="MGI:109207"/>
<dbReference type="CTD" id="1982"/>
<dbReference type="MGI" id="MGI:109207">
    <property type="gene designation" value="Eif4g2"/>
</dbReference>
<dbReference type="eggNOG" id="KOG0401">
    <property type="taxonomic scope" value="Eukaryota"/>
</dbReference>
<dbReference type="InParanoid" id="Q62448"/>
<dbReference type="OrthoDB" id="63907at9989"/>
<dbReference type="PhylomeDB" id="Q62448"/>
<dbReference type="Reactome" id="R-MMU-1169408">
    <property type="pathway name" value="ISG15 antiviral mechanism"/>
</dbReference>
<dbReference type="BioGRID-ORCS" id="13690">
    <property type="hits" value="21 hits in 75 CRISPR screens"/>
</dbReference>
<dbReference type="ChiTaRS" id="Eif4g2">
    <property type="organism name" value="mouse"/>
</dbReference>
<dbReference type="PRO" id="PR:Q62448"/>
<dbReference type="Proteomes" id="UP000000589">
    <property type="component" value="Unplaced"/>
</dbReference>
<dbReference type="RNAct" id="Q62448">
    <property type="molecule type" value="protein"/>
</dbReference>
<dbReference type="GO" id="GO:0005737">
    <property type="term" value="C:cytoplasm"/>
    <property type="evidence" value="ECO:0000314"/>
    <property type="project" value="MGI"/>
</dbReference>
<dbReference type="GO" id="GO:0016281">
    <property type="term" value="C:eukaryotic translation initiation factor 4F complex"/>
    <property type="evidence" value="ECO:0000250"/>
    <property type="project" value="UniProtKB"/>
</dbReference>
<dbReference type="GO" id="GO:0014069">
    <property type="term" value="C:postsynaptic density"/>
    <property type="evidence" value="ECO:0000314"/>
    <property type="project" value="SynGO"/>
</dbReference>
<dbReference type="GO" id="GO:0003723">
    <property type="term" value="F:RNA binding"/>
    <property type="evidence" value="ECO:0007669"/>
    <property type="project" value="InterPro"/>
</dbReference>
<dbReference type="GO" id="GO:0008135">
    <property type="term" value="F:translation factor activity, RNA binding"/>
    <property type="evidence" value="ECO:0000250"/>
    <property type="project" value="UniProtKB"/>
</dbReference>
<dbReference type="GO" id="GO:0003743">
    <property type="term" value="F:translation initiation factor activity"/>
    <property type="evidence" value="ECO:0000314"/>
    <property type="project" value="UniProtKB"/>
</dbReference>
<dbReference type="GO" id="GO:0006446">
    <property type="term" value="P:regulation of translational initiation"/>
    <property type="evidence" value="ECO:0000314"/>
    <property type="project" value="UniProtKB"/>
</dbReference>
<dbReference type="CDD" id="cd11559">
    <property type="entry name" value="W2_eIF4G1_like"/>
    <property type="match status" value="1"/>
</dbReference>
<dbReference type="FunFam" id="1.25.40.180:FF:000007">
    <property type="entry name" value="Eukaryotic translation initiation factor 4 gamma 2"/>
    <property type="match status" value="1"/>
</dbReference>
<dbReference type="FunFam" id="1.25.40.180:FF:000011">
    <property type="entry name" value="Eukaryotic translation initiation factor 4 gamma 2"/>
    <property type="match status" value="1"/>
</dbReference>
<dbReference type="FunFam" id="1.25.40.180:FF:000017">
    <property type="entry name" value="Eukaryotic translation initiation factor 4 gamma 2"/>
    <property type="match status" value="1"/>
</dbReference>
<dbReference type="Gene3D" id="1.25.40.180">
    <property type="match status" value="3"/>
</dbReference>
<dbReference type="InterPro" id="IPR016024">
    <property type="entry name" value="ARM-type_fold"/>
</dbReference>
<dbReference type="InterPro" id="IPR003891">
    <property type="entry name" value="Initiation_fac_eIF4g_MI"/>
</dbReference>
<dbReference type="InterPro" id="IPR003890">
    <property type="entry name" value="MIF4G-like_typ-3"/>
</dbReference>
<dbReference type="InterPro" id="IPR003307">
    <property type="entry name" value="W2_domain"/>
</dbReference>
<dbReference type="PANTHER" id="PTHR23253">
    <property type="entry name" value="EUKARYOTIC TRANSLATION INITIATION FACTOR 4 GAMMA"/>
    <property type="match status" value="1"/>
</dbReference>
<dbReference type="PANTHER" id="PTHR23253:SF9">
    <property type="entry name" value="EUKARYOTIC TRANSLATION INITIATION FACTOR 4 GAMMA 2"/>
    <property type="match status" value="1"/>
</dbReference>
<dbReference type="Pfam" id="PF02847">
    <property type="entry name" value="MA3"/>
    <property type="match status" value="1"/>
</dbReference>
<dbReference type="Pfam" id="PF02854">
    <property type="entry name" value="MIF4G"/>
    <property type="match status" value="1"/>
</dbReference>
<dbReference type="Pfam" id="PF02020">
    <property type="entry name" value="W2"/>
    <property type="match status" value="1"/>
</dbReference>
<dbReference type="SMART" id="SM00515">
    <property type="entry name" value="eIF5C"/>
    <property type="match status" value="1"/>
</dbReference>
<dbReference type="SMART" id="SM00544">
    <property type="entry name" value="MA3"/>
    <property type="match status" value="1"/>
</dbReference>
<dbReference type="SMART" id="SM00543">
    <property type="entry name" value="MIF4G"/>
    <property type="match status" value="1"/>
</dbReference>
<dbReference type="SUPFAM" id="SSF48371">
    <property type="entry name" value="ARM repeat"/>
    <property type="match status" value="3"/>
</dbReference>
<dbReference type="PROSITE" id="PS51366">
    <property type="entry name" value="MI"/>
    <property type="match status" value="1"/>
</dbReference>
<dbReference type="PROSITE" id="PS51363">
    <property type="entry name" value="W2"/>
    <property type="match status" value="1"/>
</dbReference>
<gene>
    <name evidence="10" type="primary">Eif4g2</name>
    <name evidence="10" type="synonym">Nat1</name>
</gene>
<accession>Q62448</accession>
<accession>P97867</accession>
<accession>Q0VGZ3</accession>
<accession>Q3UNC1</accession>
<accession>Q5XKD8</accession>
<accession>Q6P1Z0</accession>
<accession>Q921U3</accession>
<evidence type="ECO:0000250" key="1">
    <source>
        <dbReference type="UniProtKB" id="P78344"/>
    </source>
</evidence>
<evidence type="ECO:0000255" key="2">
    <source>
        <dbReference type="PROSITE-ProRule" id="PRU00695"/>
    </source>
</evidence>
<evidence type="ECO:0000255" key="3">
    <source>
        <dbReference type="PROSITE-ProRule" id="PRU00698"/>
    </source>
</evidence>
<evidence type="ECO:0000256" key="4">
    <source>
        <dbReference type="SAM" id="MobiDB-lite"/>
    </source>
</evidence>
<evidence type="ECO:0000269" key="5">
    <source>
    </source>
</evidence>
<evidence type="ECO:0000269" key="6">
    <source>
    </source>
</evidence>
<evidence type="ECO:0000269" key="7">
    <source>
    </source>
</evidence>
<evidence type="ECO:0000303" key="8">
    <source>
    </source>
</evidence>
<evidence type="ECO:0000305" key="9"/>
<evidence type="ECO:0000312" key="10">
    <source>
        <dbReference type="MGI" id="MGI:109207"/>
    </source>
</evidence>
<evidence type="ECO:0007744" key="11">
    <source>
    </source>
</evidence>
<reference evidence="9" key="1">
    <citation type="journal article" date="1997" name="Genes Dev.">
        <title>A novel translational repressor mRNA is edited extensively in livers containing tumors caused by the transgene expression of the apoB mRNA-editing enzyme.</title>
        <authorList>
            <person name="Yamanaka S."/>
            <person name="Poksay K.S."/>
            <person name="Arnold K.S."/>
            <person name="Innerarity T.L."/>
        </authorList>
    </citation>
    <scope>NUCLEOTIDE SEQUENCE [MRNA] (ISOFORM 1)</scope>
    <scope>FUNCTION</scope>
</reference>
<reference evidence="9" key="2">
    <citation type="journal article" date="1997" name="Genomics">
        <title>cDNA cloning, expression analysis, and chromosomal localization of a gene with high homology to wheat eIF-(iso)4F and mammalian eIF-4G.</title>
        <authorList>
            <person name="Shaughnessy J.D. Jr."/>
            <person name="Jenkins N.A."/>
            <person name="Copeland N.G."/>
        </authorList>
    </citation>
    <scope>NUCLEOTIDE SEQUENCE [MRNA] (ISOFORM 1)</scope>
    <scope>TISSUE SPECIFICITY</scope>
    <source>
        <tissue evidence="6">Brain</tissue>
    </source>
</reference>
<reference key="3">
    <citation type="journal article" date="2005" name="Science">
        <title>The transcriptional landscape of the mammalian genome.</title>
        <authorList>
            <person name="Carninci P."/>
            <person name="Kasukawa T."/>
            <person name="Katayama S."/>
            <person name="Gough J."/>
            <person name="Frith M.C."/>
            <person name="Maeda N."/>
            <person name="Oyama R."/>
            <person name="Ravasi T."/>
            <person name="Lenhard B."/>
            <person name="Wells C."/>
            <person name="Kodzius R."/>
            <person name="Shimokawa K."/>
            <person name="Bajic V.B."/>
            <person name="Brenner S.E."/>
            <person name="Batalov S."/>
            <person name="Forrest A.R."/>
            <person name="Zavolan M."/>
            <person name="Davis M.J."/>
            <person name="Wilming L.G."/>
            <person name="Aidinis V."/>
            <person name="Allen J.E."/>
            <person name="Ambesi-Impiombato A."/>
            <person name="Apweiler R."/>
            <person name="Aturaliya R.N."/>
            <person name="Bailey T.L."/>
            <person name="Bansal M."/>
            <person name="Baxter L."/>
            <person name="Beisel K.W."/>
            <person name="Bersano T."/>
            <person name="Bono H."/>
            <person name="Chalk A.M."/>
            <person name="Chiu K.P."/>
            <person name="Choudhary V."/>
            <person name="Christoffels A."/>
            <person name="Clutterbuck D.R."/>
            <person name="Crowe M.L."/>
            <person name="Dalla E."/>
            <person name="Dalrymple B.P."/>
            <person name="de Bono B."/>
            <person name="Della Gatta G."/>
            <person name="di Bernardo D."/>
            <person name="Down T."/>
            <person name="Engstrom P."/>
            <person name="Fagiolini M."/>
            <person name="Faulkner G."/>
            <person name="Fletcher C.F."/>
            <person name="Fukushima T."/>
            <person name="Furuno M."/>
            <person name="Futaki S."/>
            <person name="Gariboldi M."/>
            <person name="Georgii-Hemming P."/>
            <person name="Gingeras T.R."/>
            <person name="Gojobori T."/>
            <person name="Green R.E."/>
            <person name="Gustincich S."/>
            <person name="Harbers M."/>
            <person name="Hayashi Y."/>
            <person name="Hensch T.K."/>
            <person name="Hirokawa N."/>
            <person name="Hill D."/>
            <person name="Huminiecki L."/>
            <person name="Iacono M."/>
            <person name="Ikeo K."/>
            <person name="Iwama A."/>
            <person name="Ishikawa T."/>
            <person name="Jakt M."/>
            <person name="Kanapin A."/>
            <person name="Katoh M."/>
            <person name="Kawasawa Y."/>
            <person name="Kelso J."/>
            <person name="Kitamura H."/>
            <person name="Kitano H."/>
            <person name="Kollias G."/>
            <person name="Krishnan S.P."/>
            <person name="Kruger A."/>
            <person name="Kummerfeld S.K."/>
            <person name="Kurochkin I.V."/>
            <person name="Lareau L.F."/>
            <person name="Lazarevic D."/>
            <person name="Lipovich L."/>
            <person name="Liu J."/>
            <person name="Liuni S."/>
            <person name="McWilliam S."/>
            <person name="Madan Babu M."/>
            <person name="Madera M."/>
            <person name="Marchionni L."/>
            <person name="Matsuda H."/>
            <person name="Matsuzawa S."/>
            <person name="Miki H."/>
            <person name="Mignone F."/>
            <person name="Miyake S."/>
            <person name="Morris K."/>
            <person name="Mottagui-Tabar S."/>
            <person name="Mulder N."/>
            <person name="Nakano N."/>
            <person name="Nakauchi H."/>
            <person name="Ng P."/>
            <person name="Nilsson R."/>
            <person name="Nishiguchi S."/>
            <person name="Nishikawa S."/>
            <person name="Nori F."/>
            <person name="Ohara O."/>
            <person name="Okazaki Y."/>
            <person name="Orlando V."/>
            <person name="Pang K.C."/>
            <person name="Pavan W.J."/>
            <person name="Pavesi G."/>
            <person name="Pesole G."/>
            <person name="Petrovsky N."/>
            <person name="Piazza S."/>
            <person name="Reed J."/>
            <person name="Reid J.F."/>
            <person name="Ring B.Z."/>
            <person name="Ringwald M."/>
            <person name="Rost B."/>
            <person name="Ruan Y."/>
            <person name="Salzberg S.L."/>
            <person name="Sandelin A."/>
            <person name="Schneider C."/>
            <person name="Schoenbach C."/>
            <person name="Sekiguchi K."/>
            <person name="Semple C.A."/>
            <person name="Seno S."/>
            <person name="Sessa L."/>
            <person name="Sheng Y."/>
            <person name="Shibata Y."/>
            <person name="Shimada H."/>
            <person name="Shimada K."/>
            <person name="Silva D."/>
            <person name="Sinclair B."/>
            <person name="Sperling S."/>
            <person name="Stupka E."/>
            <person name="Sugiura K."/>
            <person name="Sultana R."/>
            <person name="Takenaka Y."/>
            <person name="Taki K."/>
            <person name="Tammoja K."/>
            <person name="Tan S.L."/>
            <person name="Tang S."/>
            <person name="Taylor M.S."/>
            <person name="Tegner J."/>
            <person name="Teichmann S.A."/>
            <person name="Ueda H.R."/>
            <person name="van Nimwegen E."/>
            <person name="Verardo R."/>
            <person name="Wei C.L."/>
            <person name="Yagi K."/>
            <person name="Yamanishi H."/>
            <person name="Zabarovsky E."/>
            <person name="Zhu S."/>
            <person name="Zimmer A."/>
            <person name="Hide W."/>
            <person name="Bult C."/>
            <person name="Grimmond S.M."/>
            <person name="Teasdale R.D."/>
            <person name="Liu E.T."/>
            <person name="Brusic V."/>
            <person name="Quackenbush J."/>
            <person name="Wahlestedt C."/>
            <person name="Mattick J.S."/>
            <person name="Hume D.A."/>
            <person name="Kai C."/>
            <person name="Sasaki D."/>
            <person name="Tomaru Y."/>
            <person name="Fukuda S."/>
            <person name="Kanamori-Katayama M."/>
            <person name="Suzuki M."/>
            <person name="Aoki J."/>
            <person name="Arakawa T."/>
            <person name="Iida J."/>
            <person name="Imamura K."/>
            <person name="Itoh M."/>
            <person name="Kato T."/>
            <person name="Kawaji H."/>
            <person name="Kawagashira N."/>
            <person name="Kawashima T."/>
            <person name="Kojima M."/>
            <person name="Kondo S."/>
            <person name="Konno H."/>
            <person name="Nakano K."/>
            <person name="Ninomiya N."/>
            <person name="Nishio T."/>
            <person name="Okada M."/>
            <person name="Plessy C."/>
            <person name="Shibata K."/>
            <person name="Shiraki T."/>
            <person name="Suzuki S."/>
            <person name="Tagami M."/>
            <person name="Waki K."/>
            <person name="Watahiki A."/>
            <person name="Okamura-Oho Y."/>
            <person name="Suzuki H."/>
            <person name="Kawai J."/>
            <person name="Hayashizaki Y."/>
        </authorList>
    </citation>
    <scope>NUCLEOTIDE SEQUENCE [LARGE SCALE MRNA] (ISOFORM 1)</scope>
    <source>
        <strain>C57BL/6J</strain>
        <tissue>Embryonic lung</tissue>
    </source>
</reference>
<reference evidence="9" key="4">
    <citation type="journal article" date="2004" name="Genome Res.">
        <title>The status, quality, and expansion of the NIH full-length cDNA project: the Mammalian Gene Collection (MGC).</title>
        <authorList>
            <consortium name="The MGC Project Team"/>
        </authorList>
    </citation>
    <scope>NUCLEOTIDE SEQUENCE [LARGE SCALE MRNA] (ISOFORMS 1 AND 2)</scope>
    <source>
        <strain evidence="5">C57BL/6J</strain>
        <strain>Czech II</strain>
        <tissue>Embryonic brain</tissue>
        <tissue>Eye</tissue>
        <tissue evidence="5">Mammary gland</tissue>
    </source>
</reference>
<reference key="5">
    <citation type="journal article" date="2004" name="Mol. Cell. Proteomics">
        <title>Phosphoproteomic analysis of the developing mouse brain.</title>
        <authorList>
            <person name="Ballif B.A."/>
            <person name="Villen J."/>
            <person name="Beausoleil S.A."/>
            <person name="Schwartz D."/>
            <person name="Gygi S.P."/>
        </authorList>
    </citation>
    <scope>IDENTIFICATION BY MASS SPECTROMETRY [LARGE SCALE ANALYSIS]</scope>
    <source>
        <tissue>Embryonic brain</tissue>
    </source>
</reference>
<reference key="6">
    <citation type="journal article" date="2007" name="Proc. Natl. Acad. Sci. U.S.A.">
        <title>Large-scale phosphorylation analysis of mouse liver.</title>
        <authorList>
            <person name="Villen J."/>
            <person name="Beausoleil S.A."/>
            <person name="Gerber S.A."/>
            <person name="Gygi S.P."/>
        </authorList>
    </citation>
    <scope>IDENTIFICATION BY MASS SPECTROMETRY [LARGE SCALE ANALYSIS]</scope>
    <source>
        <tissue>Liver</tissue>
    </source>
</reference>
<reference key="7">
    <citation type="journal article" date="2009" name="Immunity">
        <title>The phagosomal proteome in interferon-gamma-activated macrophages.</title>
        <authorList>
            <person name="Trost M."/>
            <person name="English L."/>
            <person name="Lemieux S."/>
            <person name="Courcelles M."/>
            <person name="Desjardins M."/>
            <person name="Thibault P."/>
        </authorList>
    </citation>
    <scope>PHOSPHORYLATION [LARGE SCALE ANALYSIS] AT THR-507</scope>
    <scope>IDENTIFICATION BY MASS SPECTROMETRY [LARGE SCALE ANALYSIS]</scope>
</reference>
<reference key="8">
    <citation type="journal article" date="2010" name="Cell">
        <title>A tissue-specific atlas of mouse protein phosphorylation and expression.</title>
        <authorList>
            <person name="Huttlin E.L."/>
            <person name="Jedrychowski M.P."/>
            <person name="Elias J.E."/>
            <person name="Goswami T."/>
            <person name="Rad R."/>
            <person name="Beausoleil S.A."/>
            <person name="Villen J."/>
            <person name="Haas W."/>
            <person name="Sowa M.E."/>
            <person name="Gygi S.P."/>
        </authorList>
    </citation>
    <scope>IDENTIFICATION BY MASS SPECTROMETRY [LARGE SCALE ANALYSIS]</scope>
    <source>
        <tissue>Brain</tissue>
        <tissue>Brown adipose tissue</tissue>
        <tissue>Heart</tissue>
        <tissue>Kidney</tissue>
        <tissue>Liver</tissue>
        <tissue>Lung</tissue>
        <tissue>Pancreas</tissue>
        <tissue>Spleen</tissue>
        <tissue>Testis</tissue>
    </source>
</reference>
<sequence>MESAIAEGGASRFSASSGGGGSRGAPQHYPKTAGNSEFLGKTPGQNAQKWIPARSTRRDDNSAANNSANEKERHDAIFRKVRGILNKLTPEKFDKLCLELLNVGVESKLILKGVILLIVDKALEEPKYSSLYAQLCLRLAEDAPNFDGPAAEGQPGQKQSTTFRRLLISKLQDEFENRTRNVDVYDKRENPLLPEEEEQRAIAKIKMLGNIKFIGELGKLDLIHESILHKCIKTLLEKKKRVQLKDMGEDLECLCQIMRTVGPRLDHERAKSLMDQYFARMCSLMLSKELPARIRFLLQDTVELREHHWVPRKAFLDNGPKTINQIRQDAVKDLGVFIPAPMAQGRSDFFLEGPFMPPRMKMDRDPLGGLADMFGQMPGSGIGTGPGVIQDRFSPTMGRHRSNQLFNGHGGHIMPPTQSQFGEMGGKFMKSQGLSQLYHNQSQGLLSQLQGQSKDMPPRFSKKGQLNADEISLRPAQSFLMNKNQVPKLQPQITMIPPSAQPPRTQTPPLGQTPQLGLKTNPPLIQEKPAKTSKKPPPSKEELLKLTEAVVTDYLNSGNANDAVSGVREMRAPKHFLPEMLSKVIILSLDRSDEDKEKASSLISLLKQEGIATSDNFMQAFLNVLEQCPKLEVDIPLVKSYLAQFAARAIISELVSISELAQPLESGTHFPLFLLCLQQLAKLQDREWLTELFQQSKVNMQKMLPEIDQNKDRMLEILEGKGLSFLFPLLKLEKELLKQIKLDPSPQTIYKWIKDNISPKLHVDKGFVNILMTSFLQYISSEVSPPSDETDSSSAPSKEQLEQEKQLLLSFKPVMQKFLHDHVDLQVSALYALQVHCYNSSFPKGMLLRFFVHFYDMEIIEEEAFLAWKEDITQEFPGKGKALFQVNQWLTWLETAEEEESEEEAD</sequence>
<protein>
    <recommendedName>
        <fullName>Eukaryotic translation initiation factor 4 gamma 2</fullName>
        <shortName>eIF-4-gamma 2</shortName>
        <shortName>eIF-4G 2</shortName>
        <shortName>eIF4G 2</shortName>
    </recommendedName>
    <alternativeName>
        <fullName>Novel APOBEC-1 target 1</fullName>
    </alternativeName>
    <alternativeName>
        <fullName>Translation repressor NAT1</fullName>
    </alternativeName>
    <alternativeName>
        <fullName>p97</fullName>
    </alternativeName>
</protein>
<keyword id="KW-0007">Acetylation</keyword>
<keyword id="KW-0025">Alternative splicing</keyword>
<keyword id="KW-0396">Initiation factor</keyword>
<keyword id="KW-1017">Isopeptide bond</keyword>
<keyword id="KW-0488">Methylation</keyword>
<keyword id="KW-0597">Phosphoprotein</keyword>
<keyword id="KW-0648">Protein biosynthesis</keyword>
<keyword id="KW-1185">Reference proteome</keyword>
<keyword id="KW-0678">Repressor</keyword>
<keyword id="KW-0810">Translation regulation</keyword>
<keyword id="KW-0832">Ubl conjugation</keyword>
<comment type="function">
    <text evidence="1 7">Appears to play a role in the switch from cap-dependent to IRES-mediated translation during mitosis, apoptosis and viral infection. Cleaved by some caspases and viral proteases.</text>
</comment>
<comment type="subunit">
    <text evidence="1">Interacts with the serine/threonine protein kinases MKNK1 and MKNK2. Binds EIF4A and EIF3. Interacts with MIF4GD (By similarity). Interacts with DAZAP2 (By similarity).</text>
</comment>
<comment type="interaction">
    <interactant intactId="EBI-296494">
        <id>Q62448</id>
    </interactant>
    <interactant intactId="EBI-296473">
        <id>Q61823</id>
        <label>Pdcd4</label>
    </interactant>
    <organismsDiffer>false</organismsDiffer>
    <experiments>2</experiments>
</comment>
<comment type="interaction">
    <interactant intactId="EBI-296494">
        <id>Q62448</id>
    </interactant>
    <interactant intactId="EBI-641764">
        <id>P26450</id>
        <label>Pik3r1</label>
    </interactant>
    <organismsDiffer>false</organismsDiffer>
    <experiments>3</experiments>
</comment>
<comment type="alternative products">
    <event type="alternative splicing"/>
    <isoform>
        <id>Q62448-1</id>
        <name>1</name>
        <sequence type="displayed"/>
    </isoform>
    <isoform>
        <id>Q62448-2</id>
        <name>2</name>
        <sequence type="described" ref="VSP_021640"/>
    </isoform>
</comment>
<comment type="tissue specificity">
    <text evidence="6">Ubiquitously expressed in all tissues examined.</text>
</comment>
<comment type="PTM">
    <text evidence="1">Phosphorylation; hyperphosphorylated during mitosis.</text>
</comment>
<comment type="miscellaneous">
    <text>This gene has been shown to be extensively edited in the liver of APOBEC1 transgenic animals. Its aberrant editing could contribute to the potent oncogenesis induced by overexpression of APOBEC1. The aberrant edited sequence, called NAT1, is likely to be a fundamental translational repressor.</text>
</comment>
<comment type="similarity">
    <text evidence="9">Belongs to the eukaryotic initiation factor 4G family.</text>
</comment>
<comment type="sequence caution" evidence="9">
    <conflict type="erroneous initiation">
        <sequence resource="EMBL-CDS" id="BAE25826"/>
    </conflict>
    <text>Truncated N-terminus.</text>
</comment>
<name>IF4G2_MOUSE</name>
<feature type="chain" id="PRO_0000213326" description="Eukaryotic translation initiation factor 4 gamma 2">
    <location>
        <begin position="1"/>
        <end position="906"/>
    </location>
</feature>
<feature type="domain" description="MIF4G" evidence="3">
    <location>
        <begin position="78"/>
        <end position="308"/>
    </location>
</feature>
<feature type="domain" description="MI" evidence="3">
    <location>
        <begin position="542"/>
        <end position="665"/>
    </location>
</feature>
<feature type="domain" description="W2" evidence="2">
    <location>
        <begin position="719"/>
        <end position="903"/>
    </location>
</feature>
<feature type="region of interest" description="Disordered" evidence="4">
    <location>
        <begin position="1"/>
        <end position="71"/>
    </location>
</feature>
<feature type="region of interest" description="Disordered" evidence="4">
    <location>
        <begin position="497"/>
        <end position="540"/>
    </location>
</feature>
<feature type="compositionally biased region" description="Polar residues" evidence="4">
    <location>
        <begin position="502"/>
        <end position="515"/>
    </location>
</feature>
<feature type="modified residue" description="N-acetylmethionine" evidence="1">
    <location>
        <position position="1"/>
    </location>
</feature>
<feature type="modified residue" description="Phosphoserine" evidence="1">
    <location>
        <position position="11"/>
    </location>
</feature>
<feature type="modified residue" description="Phosphothreonine" evidence="1">
    <location>
        <position position="89"/>
    </location>
</feature>
<feature type="modified residue" description="Omega-N-methylarginine" evidence="1">
    <location>
        <position position="359"/>
    </location>
</feature>
<feature type="modified residue" description="Phosphoserine" evidence="1">
    <location>
        <position position="394"/>
    </location>
</feature>
<feature type="modified residue" description="N6-methyllysine" evidence="1">
    <location>
        <position position="430"/>
    </location>
</feature>
<feature type="modified residue" description="Phosphoserine" evidence="1">
    <location>
        <position position="442"/>
    </location>
</feature>
<feature type="modified residue" description="Omega-N-methylarginine" evidence="1">
    <location>
        <position position="504"/>
    </location>
</feature>
<feature type="modified residue" description="Phosphothreonine" evidence="11">
    <location>
        <position position="507"/>
    </location>
</feature>
<feature type="modified residue" description="Phosphothreonine" evidence="1">
    <location>
        <position position="513"/>
    </location>
</feature>
<feature type="modified residue" description="Phosphoserine" evidence="1">
    <location>
        <position position="901"/>
    </location>
</feature>
<feature type="cross-link" description="Glycyl lysine isopeptide (Lys-Gly) (interchain with G-Cter in SUMO2)" evidence="1">
    <location>
        <position position="574"/>
    </location>
</feature>
<feature type="splice variant" id="VSP_021640" description="In isoform 2." evidence="8">
    <location>
        <begin position="433"/>
        <end position="470"/>
    </location>
</feature>
<feature type="sequence conflict" description="In Ref. 3; BAE25826." evidence="9" ref="3">
    <original>M</original>
    <variation>V</variation>
    <location>
        <position position="1"/>
    </location>
</feature>
<feature type="sequence conflict" description="In Ref. 2; AAC53030." evidence="9" ref="2">
    <original>S</original>
    <variation>T</variation>
    <location>
        <position position="14"/>
    </location>
</feature>
<feature type="sequence conflict" description="In Ref. 2; AAC53030." evidence="9" ref="2">
    <original>L</original>
    <variation>G</variation>
    <location>
        <position position="236"/>
    </location>
</feature>
<feature type="sequence conflict" description="In Ref. 1; AAC53095." evidence="9" ref="1">
    <original>K</original>
    <variation>Q</variation>
    <location>
        <position position="245"/>
    </location>
</feature>
<feature type="sequence conflict" description="In Ref. 2; AAC53030." evidence="9" ref="2">
    <original>RS</original>
    <variation>MSR</variation>
    <location>
        <begin position="346"/>
        <end position="347"/>
    </location>
</feature>
<feature type="sequence conflict" description="In Ref. 3; BAE25826 and 4; AAH40391/AAH43034/AAH56387/AAH57673/AAH64810/AAH92521." evidence="9" ref="3 4">
    <original>S</original>
    <variation>N</variation>
    <location>
        <position position="347"/>
    </location>
</feature>
<feature type="sequence conflict" description="In Ref. 2; AAC53030." evidence="9" ref="2">
    <original>F</original>
    <variation>L</variation>
    <location>
        <position position="355"/>
    </location>
</feature>
<feature type="sequence conflict" description="In Ref. 2; AAC53030." evidence="9" ref="2">
    <original>S</original>
    <variation>P</variation>
    <location>
        <position position="394"/>
    </location>
</feature>
<feature type="sequence conflict" description="In Ref. 2; AAC53030." evidence="9" ref="2">
    <original>L</original>
    <variation>F</variation>
    <location>
        <position position="437"/>
    </location>
</feature>
<feature type="sequence conflict" description="In Ref. 2; AAC53030." evidence="9" ref="2">
    <original>S</original>
    <variation>R</variation>
    <location>
        <position position="472"/>
    </location>
</feature>
<feature type="sequence conflict" description="In Ref. 2; AAC53030." evidence="9" ref="2">
    <original>A</original>
    <variation>D</variation>
    <location>
        <position position="476"/>
    </location>
</feature>
<feature type="sequence conflict" description="In Ref. 2; AAC53030." evidence="9" ref="2">
    <original>K</original>
    <variation>M</variation>
    <location>
        <position position="488"/>
    </location>
</feature>
<feature type="sequence conflict" description="In Ref. 2; AAC53030." evidence="9" ref="2">
    <original>V</original>
    <variation>G</variation>
    <location>
        <position position="550"/>
    </location>
</feature>
<feature type="sequence conflict" description="In Ref. 2; AAC53030." evidence="9" ref="2">
    <original>D</original>
    <variation>N</variation>
    <location>
        <position position="708"/>
    </location>
</feature>
<feature type="sequence conflict" description="In Ref. 2; AAC53030." evidence="9" ref="2">
    <original>I</original>
    <variation>S</variation>
    <location>
        <position position="753"/>
    </location>
</feature>
<feature type="sequence conflict" description="In Ref. 2; AAC53030." evidence="9" ref="2">
    <original>K</original>
    <variation>T</variation>
    <location>
        <position position="760"/>
    </location>
</feature>
<feature type="sequence conflict" description="In Ref. 2; AAC53030." evidence="9" ref="2">
    <original>S</original>
    <variation>N</variation>
    <location>
        <position position="784"/>
    </location>
</feature>
<feature type="sequence conflict" description="In Ref. 2; AAC53030." evidence="9" ref="2">
    <original>SK</original>
    <variation>PT</variation>
    <location>
        <begin position="797"/>
        <end position="798"/>
    </location>
</feature>
<feature type="sequence conflict" description="In Ref. 2; AAC53030." evidence="9" ref="2">
    <original>L</original>
    <variation>V</variation>
    <location>
        <position position="825"/>
    </location>
</feature>
<feature type="sequence conflict" description="In Ref. 1; AAC53095." evidence="9" ref="1">
    <original>L</original>
    <variation>F</variation>
    <location>
        <position position="833"/>
    </location>
</feature>
<feature type="sequence conflict" description="In Ref. 2; AAC53030." evidence="9" ref="2">
    <original>K</original>
    <variation>Q</variation>
    <location>
        <position position="844"/>
    </location>
</feature>